<reference key="1">
    <citation type="submission" date="2007-11" db="EMBL/GenBank/DDBJ databases">
        <authorList>
            <consortium name="The Salmonella enterica serovar Arizonae Genome Sequencing Project"/>
            <person name="McClelland M."/>
            <person name="Sanderson E.K."/>
            <person name="Porwollik S."/>
            <person name="Spieth J."/>
            <person name="Clifton W.S."/>
            <person name="Fulton R."/>
            <person name="Chunyan W."/>
            <person name="Wollam A."/>
            <person name="Shah N."/>
            <person name="Pepin K."/>
            <person name="Bhonagiri V."/>
            <person name="Nash W."/>
            <person name="Johnson M."/>
            <person name="Thiruvilangam P."/>
            <person name="Wilson R."/>
        </authorList>
    </citation>
    <scope>NUCLEOTIDE SEQUENCE [LARGE SCALE GENOMIC DNA]</scope>
    <source>
        <strain>ATCC BAA-731 / CDC346-86 / RSK2980</strain>
    </source>
</reference>
<feature type="chain" id="PRO_1000081641" description="Probable sugar efflux transporter">
    <location>
        <begin position="1"/>
        <end position="396"/>
    </location>
</feature>
<feature type="transmembrane region" description="Helical" evidence="1">
    <location>
        <begin position="15"/>
        <end position="35"/>
    </location>
</feature>
<feature type="transmembrane region" description="Helical" evidence="1">
    <location>
        <begin position="50"/>
        <end position="70"/>
    </location>
</feature>
<feature type="transmembrane region" description="Helical" evidence="1">
    <location>
        <begin position="81"/>
        <end position="101"/>
    </location>
</feature>
<feature type="transmembrane region" description="Helical" evidence="1">
    <location>
        <begin position="103"/>
        <end position="123"/>
    </location>
</feature>
<feature type="transmembrane region" description="Helical" evidence="1">
    <location>
        <begin position="136"/>
        <end position="156"/>
    </location>
</feature>
<feature type="transmembrane region" description="Helical" evidence="1">
    <location>
        <begin position="169"/>
        <end position="189"/>
    </location>
</feature>
<feature type="transmembrane region" description="Helical" evidence="1">
    <location>
        <begin position="209"/>
        <end position="229"/>
    </location>
</feature>
<feature type="transmembrane region" description="Helical" evidence="1">
    <location>
        <begin position="246"/>
        <end position="266"/>
    </location>
</feature>
<feature type="transmembrane region" description="Helical" evidence="1">
    <location>
        <begin position="275"/>
        <end position="295"/>
    </location>
</feature>
<feature type="transmembrane region" description="Helical" evidence="1">
    <location>
        <begin position="301"/>
        <end position="321"/>
    </location>
</feature>
<feature type="transmembrane region" description="Helical" evidence="1">
    <location>
        <begin position="333"/>
        <end position="353"/>
    </location>
</feature>
<feature type="transmembrane region" description="Helical" evidence="1">
    <location>
        <begin position="364"/>
        <end position="384"/>
    </location>
</feature>
<gene>
    <name evidence="1" type="primary">sotB</name>
    <name type="ordered locus">SARI_01459</name>
</gene>
<sequence length="396" mass="42426">MTINPVSRKVAWLRVVTLAIAAFIFNTTEFVPVGLLSDIAESFHMQTAQVGIMLTIYAWVVAVMSLPFMLLTSQIERRKLLICLFVLFIASHVLSFLAWNFTVLVISRIGIAFTHAIFWSITASLAIRLAPAGKRAQALSLIATGTALAMVLGLPIGRVVGQYFGWRTTFFAIGMGALITLICLIKLLPKLPSEHSGSLKSLPLLFRRPALMSLYLLTAVVVTAHYTAYSYIEPFVQNVAGLSANFATVLLLILGGAGIIGSLVFGKLGNQHASLLVSIAISLLVVCLLLLLPAADSEAHLALLSIFWGIAIMVIGLGMQVKVLALAPDATDVAMALFSGIFNIGIGAGALAGNQVSLHWSMSTIGYIGAVPACAALVWAVLIFRKWPVTLEEQPR</sequence>
<accession>A9MRQ2</accession>
<keyword id="KW-0997">Cell inner membrane</keyword>
<keyword id="KW-1003">Cell membrane</keyword>
<keyword id="KW-0472">Membrane</keyword>
<keyword id="KW-1185">Reference proteome</keyword>
<keyword id="KW-0762">Sugar transport</keyword>
<keyword id="KW-0812">Transmembrane</keyword>
<keyword id="KW-1133">Transmembrane helix</keyword>
<keyword id="KW-0813">Transport</keyword>
<evidence type="ECO:0000255" key="1">
    <source>
        <dbReference type="HAMAP-Rule" id="MF_00517"/>
    </source>
</evidence>
<protein>
    <recommendedName>
        <fullName evidence="1">Probable sugar efflux transporter</fullName>
    </recommendedName>
</protein>
<organism>
    <name type="scientific">Salmonella arizonae (strain ATCC BAA-731 / CDC346-86 / RSK2980)</name>
    <dbReference type="NCBI Taxonomy" id="41514"/>
    <lineage>
        <taxon>Bacteria</taxon>
        <taxon>Pseudomonadati</taxon>
        <taxon>Pseudomonadota</taxon>
        <taxon>Gammaproteobacteria</taxon>
        <taxon>Enterobacterales</taxon>
        <taxon>Enterobacteriaceae</taxon>
        <taxon>Salmonella</taxon>
    </lineage>
</organism>
<proteinExistence type="inferred from homology"/>
<name>SOTB_SALAR</name>
<comment type="function">
    <text evidence="1">Involved in the efflux of sugars. The physiological role may be the reduction of the intracellular concentration of toxic sugars or sugar metabolites.</text>
</comment>
<comment type="subcellular location">
    <subcellularLocation>
        <location evidence="1">Cell inner membrane</location>
        <topology evidence="1">Multi-pass membrane protein</topology>
    </subcellularLocation>
</comment>
<comment type="similarity">
    <text evidence="1">Belongs to the major facilitator superfamily. SotB (TC 2.A.1.2) family.</text>
</comment>
<dbReference type="EMBL" id="CP000880">
    <property type="protein sequence ID" value="ABX21355.1"/>
    <property type="molecule type" value="Genomic_DNA"/>
</dbReference>
<dbReference type="SMR" id="A9MRQ2"/>
<dbReference type="STRING" id="41514.SARI_01459"/>
<dbReference type="KEGG" id="ses:SARI_01459"/>
<dbReference type="HOGENOM" id="CLU_001265_61_1_6"/>
<dbReference type="Proteomes" id="UP000002084">
    <property type="component" value="Chromosome"/>
</dbReference>
<dbReference type="GO" id="GO:0005886">
    <property type="term" value="C:plasma membrane"/>
    <property type="evidence" value="ECO:0007669"/>
    <property type="project" value="UniProtKB-SubCell"/>
</dbReference>
<dbReference type="GO" id="GO:0015144">
    <property type="term" value="F:carbohydrate transmembrane transporter activity"/>
    <property type="evidence" value="ECO:0007669"/>
    <property type="project" value="UniProtKB-UniRule"/>
</dbReference>
<dbReference type="CDD" id="cd17324">
    <property type="entry name" value="MFS_NepI_like"/>
    <property type="match status" value="1"/>
</dbReference>
<dbReference type="Gene3D" id="1.20.1250.20">
    <property type="entry name" value="MFS general substrate transporter like domains"/>
    <property type="match status" value="1"/>
</dbReference>
<dbReference type="HAMAP" id="MF_00517">
    <property type="entry name" value="MFS_SotB"/>
    <property type="match status" value="1"/>
</dbReference>
<dbReference type="InterPro" id="IPR011701">
    <property type="entry name" value="MFS"/>
</dbReference>
<dbReference type="InterPro" id="IPR020846">
    <property type="entry name" value="MFS_dom"/>
</dbReference>
<dbReference type="InterPro" id="IPR050189">
    <property type="entry name" value="MFS_Efflux_Transporters"/>
</dbReference>
<dbReference type="InterPro" id="IPR036259">
    <property type="entry name" value="MFS_trans_sf"/>
</dbReference>
<dbReference type="InterPro" id="IPR023495">
    <property type="entry name" value="Sugar_effux_transptr_put"/>
</dbReference>
<dbReference type="NCBIfam" id="NF002921">
    <property type="entry name" value="PRK03545.1"/>
    <property type="match status" value="1"/>
</dbReference>
<dbReference type="PANTHER" id="PTHR43124">
    <property type="entry name" value="PURINE EFFLUX PUMP PBUE"/>
    <property type="match status" value="1"/>
</dbReference>
<dbReference type="PANTHER" id="PTHR43124:SF4">
    <property type="entry name" value="SUGAR EFFLUX TRANSPORTER"/>
    <property type="match status" value="1"/>
</dbReference>
<dbReference type="Pfam" id="PF07690">
    <property type="entry name" value="MFS_1"/>
    <property type="match status" value="1"/>
</dbReference>
<dbReference type="SUPFAM" id="SSF103473">
    <property type="entry name" value="MFS general substrate transporter"/>
    <property type="match status" value="1"/>
</dbReference>
<dbReference type="PROSITE" id="PS50850">
    <property type="entry name" value="MFS"/>
    <property type="match status" value="1"/>
</dbReference>